<proteinExistence type="evidence at protein level"/>
<reference key="1">
    <citation type="journal article" date="1985" name="Gen. Comp. Endocrinol.">
        <title>Primary structure of glucagon from an elasmobranchian fish. Torpedo marmorata.</title>
        <authorList>
            <person name="Conlon J.M."/>
            <person name="Thim L."/>
        </authorList>
    </citation>
    <scope>PROTEIN SEQUENCE</scope>
    <source>
        <tissue>Pancreas</tissue>
    </source>
</reference>
<feature type="peptide" id="PRO_0000043929" description="Glucagon">
    <location>
        <begin position="1"/>
        <end position="29"/>
    </location>
</feature>
<evidence type="ECO:0000305" key="1"/>
<comment type="function">
    <text>Promotes hydrolysis of glycogen and lipids, and raises the blood sugar level.</text>
</comment>
<comment type="subcellular location">
    <subcellularLocation>
        <location>Secreted</location>
    </subcellularLocation>
</comment>
<comment type="induction">
    <text>Produced in the A cells of the islets of Langerhans in response to a drop in blood sugar concentration.</text>
</comment>
<comment type="similarity">
    <text evidence="1">Belongs to the glucagon family.</text>
</comment>
<organism>
    <name type="scientific">Torpedo marmorata</name>
    <name type="common">Marbled electric ray</name>
    <dbReference type="NCBI Taxonomy" id="7788"/>
    <lineage>
        <taxon>Eukaryota</taxon>
        <taxon>Metazoa</taxon>
        <taxon>Chordata</taxon>
        <taxon>Craniata</taxon>
        <taxon>Vertebrata</taxon>
        <taxon>Chondrichthyes</taxon>
        <taxon>Elasmobranchii</taxon>
        <taxon>Batoidea</taxon>
        <taxon>Torpediniformes</taxon>
        <taxon>Torpedinidae</taxon>
        <taxon>Torpedo</taxon>
    </lineage>
</organism>
<dbReference type="PIR" id="S07211">
    <property type="entry name" value="S07211"/>
</dbReference>
<dbReference type="SMR" id="P09567"/>
<dbReference type="GO" id="GO:0005615">
    <property type="term" value="C:extracellular space"/>
    <property type="evidence" value="ECO:0007669"/>
    <property type="project" value="TreeGrafter"/>
</dbReference>
<dbReference type="GO" id="GO:0031769">
    <property type="term" value="F:glucagon receptor binding"/>
    <property type="evidence" value="ECO:0007669"/>
    <property type="project" value="TreeGrafter"/>
</dbReference>
<dbReference type="GO" id="GO:0005179">
    <property type="term" value="F:hormone activity"/>
    <property type="evidence" value="ECO:0007669"/>
    <property type="project" value="UniProtKB-KW"/>
</dbReference>
<dbReference type="GO" id="GO:0007188">
    <property type="term" value="P:adenylate cyclase-modulating G protein-coupled receptor signaling pathway"/>
    <property type="evidence" value="ECO:0007669"/>
    <property type="project" value="TreeGrafter"/>
</dbReference>
<dbReference type="GO" id="GO:0043066">
    <property type="term" value="P:negative regulation of apoptotic process"/>
    <property type="evidence" value="ECO:0007669"/>
    <property type="project" value="TreeGrafter"/>
</dbReference>
<dbReference type="GO" id="GO:0035774">
    <property type="term" value="P:positive regulation of insulin secretion involved in cellular response to glucose stimulus"/>
    <property type="evidence" value="ECO:0007669"/>
    <property type="project" value="TreeGrafter"/>
</dbReference>
<dbReference type="GO" id="GO:0010737">
    <property type="term" value="P:protein kinase A signaling"/>
    <property type="evidence" value="ECO:0007669"/>
    <property type="project" value="TreeGrafter"/>
</dbReference>
<dbReference type="Gene3D" id="6.10.250.590">
    <property type="match status" value="1"/>
</dbReference>
<dbReference type="InterPro" id="IPR015550">
    <property type="entry name" value="Glucagon"/>
</dbReference>
<dbReference type="InterPro" id="IPR000532">
    <property type="entry name" value="Glucagon_GIP_secretin_VIP"/>
</dbReference>
<dbReference type="PANTHER" id="PTHR11418">
    <property type="entry name" value="GLUCAGON"/>
    <property type="match status" value="1"/>
</dbReference>
<dbReference type="PANTHER" id="PTHR11418:SF0">
    <property type="entry name" value="PRO-GLUCAGON"/>
    <property type="match status" value="1"/>
</dbReference>
<dbReference type="Pfam" id="PF00123">
    <property type="entry name" value="Hormone_2"/>
    <property type="match status" value="1"/>
</dbReference>
<dbReference type="PRINTS" id="PR00275">
    <property type="entry name" value="GLUCAGON"/>
</dbReference>
<dbReference type="SMART" id="SM00070">
    <property type="entry name" value="GLUCA"/>
    <property type="match status" value="1"/>
</dbReference>
<dbReference type="PROSITE" id="PS00260">
    <property type="entry name" value="GLUCAGON"/>
    <property type="match status" value="1"/>
</dbReference>
<name>GLUC_TORMA</name>
<protein>
    <recommendedName>
        <fullName>Glucagon</fullName>
    </recommendedName>
</protein>
<gene>
    <name type="primary">gcg</name>
</gene>
<sequence length="29" mass="3511">HSEGTFTSDYSKYLDNRRAKDFVQWLMNT</sequence>
<accession>P09567</accession>
<keyword id="KW-0903">Direct protein sequencing</keyword>
<keyword id="KW-0372">Hormone</keyword>
<keyword id="KW-0964">Secreted</keyword>